<gene>
    <name evidence="1" type="primary">hisF</name>
    <name type="ordered locus">Tbd_1708</name>
</gene>
<evidence type="ECO:0000255" key="1">
    <source>
        <dbReference type="HAMAP-Rule" id="MF_01013"/>
    </source>
</evidence>
<reference key="1">
    <citation type="journal article" date="2006" name="J. Bacteriol.">
        <title>The genome sequence of the obligately chemolithoautotrophic, facultatively anaerobic bacterium Thiobacillus denitrificans.</title>
        <authorList>
            <person name="Beller H.R."/>
            <person name="Chain P.S."/>
            <person name="Letain T.E."/>
            <person name="Chakicherla A."/>
            <person name="Larimer F.W."/>
            <person name="Richardson P.M."/>
            <person name="Coleman M.A."/>
            <person name="Wood A.P."/>
            <person name="Kelly D.P."/>
        </authorList>
    </citation>
    <scope>NUCLEOTIDE SEQUENCE [LARGE SCALE GENOMIC DNA]</scope>
    <source>
        <strain>ATCC 25259 / T1</strain>
    </source>
</reference>
<name>HIS6_THIDA</name>
<comment type="function">
    <text evidence="1">IGPS catalyzes the conversion of PRFAR and glutamine to IGP, AICAR and glutamate. The HisF subunit catalyzes the cyclization activity that produces IGP and AICAR from PRFAR using the ammonia provided by the HisH subunit.</text>
</comment>
<comment type="catalytic activity">
    <reaction evidence="1">
        <text>5-[(5-phospho-1-deoxy-D-ribulos-1-ylimino)methylamino]-1-(5-phospho-beta-D-ribosyl)imidazole-4-carboxamide + L-glutamine = D-erythro-1-(imidazol-4-yl)glycerol 3-phosphate + 5-amino-1-(5-phospho-beta-D-ribosyl)imidazole-4-carboxamide + L-glutamate + H(+)</text>
        <dbReference type="Rhea" id="RHEA:24793"/>
        <dbReference type="ChEBI" id="CHEBI:15378"/>
        <dbReference type="ChEBI" id="CHEBI:29985"/>
        <dbReference type="ChEBI" id="CHEBI:58278"/>
        <dbReference type="ChEBI" id="CHEBI:58359"/>
        <dbReference type="ChEBI" id="CHEBI:58475"/>
        <dbReference type="ChEBI" id="CHEBI:58525"/>
        <dbReference type="EC" id="4.3.2.10"/>
    </reaction>
</comment>
<comment type="pathway">
    <text evidence="1">Amino-acid biosynthesis; L-histidine biosynthesis; L-histidine from 5-phospho-alpha-D-ribose 1-diphosphate: step 5/9.</text>
</comment>
<comment type="subunit">
    <text evidence="1">Heterodimer of HisH and HisF.</text>
</comment>
<comment type="subcellular location">
    <subcellularLocation>
        <location evidence="1">Cytoplasm</location>
    </subcellularLocation>
</comment>
<comment type="similarity">
    <text evidence="1">Belongs to the HisA/HisF family.</text>
</comment>
<proteinExistence type="inferred from homology"/>
<organism>
    <name type="scientific">Thiobacillus denitrificans (strain ATCC 25259 / T1)</name>
    <dbReference type="NCBI Taxonomy" id="292415"/>
    <lineage>
        <taxon>Bacteria</taxon>
        <taxon>Pseudomonadati</taxon>
        <taxon>Pseudomonadota</taxon>
        <taxon>Betaproteobacteria</taxon>
        <taxon>Nitrosomonadales</taxon>
        <taxon>Thiobacillaceae</taxon>
        <taxon>Thiobacillus</taxon>
    </lineage>
</organism>
<protein>
    <recommendedName>
        <fullName evidence="1">Imidazole glycerol phosphate synthase subunit HisF</fullName>
        <ecNumber evidence="1">4.3.2.10</ecNumber>
    </recommendedName>
    <alternativeName>
        <fullName evidence="1">IGP synthase cyclase subunit</fullName>
    </alternativeName>
    <alternativeName>
        <fullName evidence="1">IGP synthase subunit HisF</fullName>
    </alternativeName>
    <alternativeName>
        <fullName evidence="1">ImGP synthase subunit HisF</fullName>
        <shortName evidence="1">IGPS subunit HisF</shortName>
    </alternativeName>
</protein>
<dbReference type="EC" id="4.3.2.10" evidence="1"/>
<dbReference type="EMBL" id="CP000116">
    <property type="protein sequence ID" value="AAZ97661.1"/>
    <property type="molecule type" value="Genomic_DNA"/>
</dbReference>
<dbReference type="RefSeq" id="WP_011312220.1">
    <property type="nucleotide sequence ID" value="NC_007404.1"/>
</dbReference>
<dbReference type="SMR" id="Q3SEU8"/>
<dbReference type="STRING" id="292415.Tbd_1708"/>
<dbReference type="KEGG" id="tbd:Tbd_1708"/>
<dbReference type="eggNOG" id="COG0107">
    <property type="taxonomic scope" value="Bacteria"/>
</dbReference>
<dbReference type="HOGENOM" id="CLU_048577_4_0_4"/>
<dbReference type="OrthoDB" id="9781903at2"/>
<dbReference type="UniPathway" id="UPA00031">
    <property type="reaction ID" value="UER00010"/>
</dbReference>
<dbReference type="Proteomes" id="UP000008291">
    <property type="component" value="Chromosome"/>
</dbReference>
<dbReference type="GO" id="GO:0005737">
    <property type="term" value="C:cytoplasm"/>
    <property type="evidence" value="ECO:0007669"/>
    <property type="project" value="UniProtKB-SubCell"/>
</dbReference>
<dbReference type="GO" id="GO:0000107">
    <property type="term" value="F:imidazoleglycerol-phosphate synthase activity"/>
    <property type="evidence" value="ECO:0007669"/>
    <property type="project" value="UniProtKB-UniRule"/>
</dbReference>
<dbReference type="GO" id="GO:0016833">
    <property type="term" value="F:oxo-acid-lyase activity"/>
    <property type="evidence" value="ECO:0007669"/>
    <property type="project" value="InterPro"/>
</dbReference>
<dbReference type="GO" id="GO:0000105">
    <property type="term" value="P:L-histidine biosynthetic process"/>
    <property type="evidence" value="ECO:0007669"/>
    <property type="project" value="UniProtKB-UniRule"/>
</dbReference>
<dbReference type="CDD" id="cd04731">
    <property type="entry name" value="HisF"/>
    <property type="match status" value="1"/>
</dbReference>
<dbReference type="FunFam" id="3.20.20.70:FF:000006">
    <property type="entry name" value="Imidazole glycerol phosphate synthase subunit HisF"/>
    <property type="match status" value="1"/>
</dbReference>
<dbReference type="Gene3D" id="3.20.20.70">
    <property type="entry name" value="Aldolase class I"/>
    <property type="match status" value="1"/>
</dbReference>
<dbReference type="HAMAP" id="MF_01013">
    <property type="entry name" value="HisF"/>
    <property type="match status" value="1"/>
</dbReference>
<dbReference type="InterPro" id="IPR013785">
    <property type="entry name" value="Aldolase_TIM"/>
</dbReference>
<dbReference type="InterPro" id="IPR020021">
    <property type="entry name" value="Glycosyl_amidation-assoc_WbuZ"/>
</dbReference>
<dbReference type="InterPro" id="IPR006062">
    <property type="entry name" value="His_biosynth"/>
</dbReference>
<dbReference type="InterPro" id="IPR004651">
    <property type="entry name" value="HisF"/>
</dbReference>
<dbReference type="InterPro" id="IPR050064">
    <property type="entry name" value="IGPS_HisA/HisF"/>
</dbReference>
<dbReference type="InterPro" id="IPR011060">
    <property type="entry name" value="RibuloseP-bd_barrel"/>
</dbReference>
<dbReference type="NCBIfam" id="TIGR00735">
    <property type="entry name" value="hisF"/>
    <property type="match status" value="1"/>
</dbReference>
<dbReference type="NCBIfam" id="TIGR03572">
    <property type="entry name" value="WbuZ"/>
    <property type="match status" value="1"/>
</dbReference>
<dbReference type="PANTHER" id="PTHR21235:SF2">
    <property type="entry name" value="IMIDAZOLE GLYCEROL PHOSPHATE SYNTHASE HISHF"/>
    <property type="match status" value="1"/>
</dbReference>
<dbReference type="PANTHER" id="PTHR21235">
    <property type="entry name" value="IMIDAZOLE GLYCEROL PHOSPHATE SYNTHASE SUBUNIT HISF/H IGP SYNTHASE SUBUNIT HISF/H"/>
    <property type="match status" value="1"/>
</dbReference>
<dbReference type="Pfam" id="PF00977">
    <property type="entry name" value="His_biosynth"/>
    <property type="match status" value="1"/>
</dbReference>
<dbReference type="SUPFAM" id="SSF51366">
    <property type="entry name" value="Ribulose-phoshate binding barrel"/>
    <property type="match status" value="1"/>
</dbReference>
<feature type="chain" id="PRO_0000142256" description="Imidazole glycerol phosphate synthase subunit HisF">
    <location>
        <begin position="1"/>
        <end position="251"/>
    </location>
</feature>
<feature type="active site" evidence="1">
    <location>
        <position position="11"/>
    </location>
</feature>
<feature type="active site" evidence="1">
    <location>
        <position position="130"/>
    </location>
</feature>
<accession>Q3SEU8</accession>
<keyword id="KW-0028">Amino-acid biosynthesis</keyword>
<keyword id="KW-0963">Cytoplasm</keyword>
<keyword id="KW-0368">Histidine biosynthesis</keyword>
<keyword id="KW-0456">Lyase</keyword>
<keyword id="KW-1185">Reference proteome</keyword>
<sequence>MLAKRIIPCLDVTNGRVVKGVNFVELKDAGDPVEIARGYNEAGADELTFLDITASSDNRDLILHIVEAVASEVFIPLTVGGGVRAVADVQRLLNAGADKVSINTSAVTNPQLVKDAADRYGSQCIVVAIDAKRVGDHWEVFTHGGRTATGLDAVEWAKKMESLGAGELLLTSMDRDGTKTGFDLELTRAISDAVDVPIVASGGVGTLQHMVDGVREGRADAVLAASIFHFGEYRVDEAKAYMKRHGIEVRL</sequence>